<protein>
    <recommendedName>
        <fullName>High mobility group B protein 2</fullName>
    </recommendedName>
    <alternativeName>
        <fullName>High mobility group protein B 1</fullName>
        <shortName>AtHMGbeta1</shortName>
        <shortName>HMG beta 1</shortName>
    </alternativeName>
    <alternativeName>
        <fullName>Nucleosome/chromatin assembly factor group D 02</fullName>
        <shortName>Nucleosome/chromatin assembly factor group D 2</shortName>
    </alternativeName>
</protein>
<evidence type="ECO:0000250" key="1">
    <source>
        <dbReference type="UniProtKB" id="O49595"/>
    </source>
</evidence>
<evidence type="ECO:0000255" key="2">
    <source>
        <dbReference type="PROSITE-ProRule" id="PRU00267"/>
    </source>
</evidence>
<evidence type="ECO:0000256" key="3">
    <source>
        <dbReference type="SAM" id="MobiDB-lite"/>
    </source>
</evidence>
<evidence type="ECO:0000269" key="4">
    <source>
    </source>
</evidence>
<evidence type="ECO:0000269" key="5">
    <source>
    </source>
</evidence>
<evidence type="ECO:0000269" key="6">
    <source>
    </source>
</evidence>
<evidence type="ECO:0000269" key="7">
    <source>
    </source>
</evidence>
<evidence type="ECO:0000305" key="8"/>
<feature type="chain" id="PRO_0000399928" description="High mobility group B protein 2">
    <location>
        <begin position="1"/>
        <end position="144"/>
    </location>
</feature>
<feature type="DNA-binding region" description="HMG box" evidence="2">
    <location>
        <begin position="38"/>
        <end position="107"/>
    </location>
</feature>
<feature type="region of interest" description="Disordered" evidence="3">
    <location>
        <begin position="1"/>
        <end position="42"/>
    </location>
</feature>
<feature type="region of interest" description="Disordered" evidence="3">
    <location>
        <begin position="57"/>
        <end position="94"/>
    </location>
</feature>
<feature type="region of interest" description="Disordered" evidence="3">
    <location>
        <begin position="106"/>
        <end position="144"/>
    </location>
</feature>
<feature type="compositionally biased region" description="Basic and acidic residues" evidence="3">
    <location>
        <begin position="1"/>
        <end position="12"/>
    </location>
</feature>
<feature type="compositionally biased region" description="Basic and acidic residues" evidence="3">
    <location>
        <begin position="73"/>
        <end position="94"/>
    </location>
</feature>
<feature type="compositionally biased region" description="Acidic residues" evidence="3">
    <location>
        <begin position="127"/>
        <end position="144"/>
    </location>
</feature>
<feature type="modified residue" description="Phosphoserine" evidence="1">
    <location>
        <position position="125"/>
    </location>
</feature>
<feature type="splice variant" id="VSP_039940" description="In isoform 2." evidence="8">
    <original>EEDDD</original>
    <variation>DDD</variation>
    <location>
        <begin position="140"/>
        <end position="144"/>
    </location>
</feature>
<feature type="splice variant" id="VSP_039941" description="In isoform 3." evidence="8">
    <original>EDDD</original>
    <variation>DDD</variation>
    <location>
        <begin position="141"/>
        <end position="144"/>
    </location>
</feature>
<gene>
    <name type="primary">HMGB2</name>
    <name type="synonym">HMGB1</name>
    <name type="synonym">HMGBETA1</name>
    <name type="synonym">NFD02</name>
    <name type="synonym">NFD2</name>
    <name type="ordered locus">At1g20693</name>
    <name type="ORF">F2D10.18</name>
</gene>
<organism>
    <name type="scientific">Arabidopsis thaliana</name>
    <name type="common">Mouse-ear cress</name>
    <dbReference type="NCBI Taxonomy" id="3702"/>
    <lineage>
        <taxon>Eukaryota</taxon>
        <taxon>Viridiplantae</taxon>
        <taxon>Streptophyta</taxon>
        <taxon>Embryophyta</taxon>
        <taxon>Tracheophyta</taxon>
        <taxon>Spermatophyta</taxon>
        <taxon>Magnoliopsida</taxon>
        <taxon>eudicotyledons</taxon>
        <taxon>Gunneridae</taxon>
        <taxon>Pentapetalae</taxon>
        <taxon>rosids</taxon>
        <taxon>malvids</taxon>
        <taxon>Brassicales</taxon>
        <taxon>Brassicaceae</taxon>
        <taxon>Camelineae</taxon>
        <taxon>Arabidopsis</taxon>
    </lineage>
</organism>
<dbReference type="EMBL" id="Y14072">
    <property type="protein sequence ID" value="CAA74401.1"/>
    <property type="molecule type" value="mRNA"/>
</dbReference>
<dbReference type="EMBL" id="AC069251">
    <property type="protein sequence ID" value="AAF80615.1"/>
    <property type="status" value="ALT_SEQ"/>
    <property type="molecule type" value="Genomic_DNA"/>
</dbReference>
<dbReference type="EMBL" id="CP002684">
    <property type="protein sequence ID" value="AEE30006.1"/>
    <property type="molecule type" value="Genomic_DNA"/>
</dbReference>
<dbReference type="EMBL" id="CP002684">
    <property type="protein sequence ID" value="AEE30007.1"/>
    <property type="molecule type" value="Genomic_DNA"/>
</dbReference>
<dbReference type="EMBL" id="CP002684">
    <property type="protein sequence ID" value="AEE30008.1"/>
    <property type="molecule type" value="Genomic_DNA"/>
</dbReference>
<dbReference type="EMBL" id="AF370248">
    <property type="protein sequence ID" value="AAK44063.1"/>
    <property type="molecule type" value="mRNA"/>
</dbReference>
<dbReference type="EMBL" id="AY063064">
    <property type="protein sequence ID" value="AAL34238.1"/>
    <property type="molecule type" value="mRNA"/>
</dbReference>
<dbReference type="EMBL" id="AK118543">
    <property type="protein sequence ID" value="BAC43146.1"/>
    <property type="molecule type" value="mRNA"/>
</dbReference>
<dbReference type="EMBL" id="AB493468">
    <property type="protein sequence ID" value="BAH30306.1"/>
    <property type="molecule type" value="mRNA"/>
</dbReference>
<dbReference type="EMBL" id="AY084731">
    <property type="protein sequence ID" value="AAM61305.1"/>
    <property type="molecule type" value="mRNA"/>
</dbReference>
<dbReference type="PIR" id="F86339">
    <property type="entry name" value="F86339"/>
</dbReference>
<dbReference type="PIR" id="T51597">
    <property type="entry name" value="T51597"/>
</dbReference>
<dbReference type="RefSeq" id="NP_001031074.1">
    <molecule id="O49596-2"/>
    <property type="nucleotide sequence ID" value="NM_001035997.1"/>
</dbReference>
<dbReference type="RefSeq" id="NP_001077569.1">
    <molecule id="O49596-3"/>
    <property type="nucleotide sequence ID" value="NM_001084100.1"/>
</dbReference>
<dbReference type="RefSeq" id="NP_564123.1">
    <molecule id="O49596-1"/>
    <property type="nucleotide sequence ID" value="NM_101920.3"/>
</dbReference>
<dbReference type="SMR" id="O49596"/>
<dbReference type="BioGRID" id="23897">
    <property type="interactions" value="5"/>
</dbReference>
<dbReference type="FunCoup" id="O49596">
    <property type="interactions" value="2591"/>
</dbReference>
<dbReference type="IntAct" id="O49596">
    <property type="interactions" value="4"/>
</dbReference>
<dbReference type="STRING" id="3702.O49596"/>
<dbReference type="iPTMnet" id="O49596"/>
<dbReference type="PaxDb" id="3702-AT1G20693.1"/>
<dbReference type="ProteomicsDB" id="230263">
    <molecule id="O49596-1"/>
</dbReference>
<dbReference type="EnsemblPlants" id="AT1G20693.1">
    <molecule id="O49596-1"/>
    <property type="protein sequence ID" value="AT1G20693.1"/>
    <property type="gene ID" value="AT1G20693"/>
</dbReference>
<dbReference type="EnsemblPlants" id="AT1G20693.2">
    <molecule id="O49596-2"/>
    <property type="protein sequence ID" value="AT1G20693.2"/>
    <property type="gene ID" value="AT1G20693"/>
</dbReference>
<dbReference type="EnsemblPlants" id="AT1G20693.3">
    <molecule id="O49596-3"/>
    <property type="protein sequence ID" value="AT1G20693.3"/>
    <property type="gene ID" value="AT1G20693"/>
</dbReference>
<dbReference type="GeneID" id="838658"/>
<dbReference type="Gramene" id="AT1G20693.1">
    <molecule id="O49596-1"/>
    <property type="protein sequence ID" value="AT1G20693.1"/>
    <property type="gene ID" value="AT1G20693"/>
</dbReference>
<dbReference type="Gramene" id="AT1G20693.2">
    <molecule id="O49596-2"/>
    <property type="protein sequence ID" value="AT1G20693.2"/>
    <property type="gene ID" value="AT1G20693"/>
</dbReference>
<dbReference type="Gramene" id="AT1G20693.3">
    <molecule id="O49596-3"/>
    <property type="protein sequence ID" value="AT1G20693.3"/>
    <property type="gene ID" value="AT1G20693"/>
</dbReference>
<dbReference type="KEGG" id="ath:AT1G20693"/>
<dbReference type="Araport" id="AT1G20693"/>
<dbReference type="TAIR" id="AT1G20693">
    <property type="gene designation" value="HMGB2"/>
</dbReference>
<dbReference type="eggNOG" id="KOG0381">
    <property type="taxonomic scope" value="Eukaryota"/>
</dbReference>
<dbReference type="InParanoid" id="O49596"/>
<dbReference type="OMA" id="PLKFCIC"/>
<dbReference type="OrthoDB" id="1919336at2759"/>
<dbReference type="PhylomeDB" id="O49596"/>
<dbReference type="CD-CODE" id="4299E36E">
    <property type="entry name" value="Nucleolus"/>
</dbReference>
<dbReference type="PRO" id="PR:O49596"/>
<dbReference type="Proteomes" id="UP000006548">
    <property type="component" value="Chromosome 1"/>
</dbReference>
<dbReference type="ExpressionAtlas" id="O49596">
    <property type="expression patterns" value="baseline and differential"/>
</dbReference>
<dbReference type="GO" id="GO:0000785">
    <property type="term" value="C:chromatin"/>
    <property type="evidence" value="ECO:0000304"/>
    <property type="project" value="TAIR"/>
</dbReference>
<dbReference type="GO" id="GO:0005829">
    <property type="term" value="C:cytosol"/>
    <property type="evidence" value="ECO:0007669"/>
    <property type="project" value="UniProtKB-SubCell"/>
</dbReference>
<dbReference type="GO" id="GO:0005634">
    <property type="term" value="C:nucleus"/>
    <property type="evidence" value="ECO:0000314"/>
    <property type="project" value="TAIR"/>
</dbReference>
<dbReference type="GO" id="GO:0003682">
    <property type="term" value="F:chromatin binding"/>
    <property type="evidence" value="ECO:0000304"/>
    <property type="project" value="TAIR"/>
</dbReference>
<dbReference type="GO" id="GO:0003677">
    <property type="term" value="F:DNA binding"/>
    <property type="evidence" value="ECO:0000314"/>
    <property type="project" value="TAIR"/>
</dbReference>
<dbReference type="GO" id="GO:0003700">
    <property type="term" value="F:DNA-binding transcription factor activity"/>
    <property type="evidence" value="ECO:0000250"/>
    <property type="project" value="TAIR"/>
</dbReference>
<dbReference type="GO" id="GO:0030527">
    <property type="term" value="F:structural constituent of chromatin"/>
    <property type="evidence" value="ECO:0000304"/>
    <property type="project" value="TAIR"/>
</dbReference>
<dbReference type="GO" id="GO:0006325">
    <property type="term" value="P:chromatin organization"/>
    <property type="evidence" value="ECO:0000304"/>
    <property type="project" value="TAIR"/>
</dbReference>
<dbReference type="CDD" id="cd22005">
    <property type="entry name" value="HMG-box_AtHMGB1-like"/>
    <property type="match status" value="1"/>
</dbReference>
<dbReference type="FunFam" id="1.10.30.10:FF:000044">
    <property type="entry name" value="High mobility group B1"/>
    <property type="match status" value="1"/>
</dbReference>
<dbReference type="Gene3D" id="1.10.30.10">
    <property type="entry name" value="High mobility group box domain"/>
    <property type="match status" value="1"/>
</dbReference>
<dbReference type="InterPro" id="IPR009071">
    <property type="entry name" value="HMG_box_dom"/>
</dbReference>
<dbReference type="InterPro" id="IPR036910">
    <property type="entry name" value="HMG_box_dom_sf"/>
</dbReference>
<dbReference type="InterPro" id="IPR031061">
    <property type="entry name" value="HMGB_plant"/>
</dbReference>
<dbReference type="PANTHER" id="PTHR46261:SF22">
    <property type="entry name" value="HIGH MOBILITY GROUP B PROTEIN 2-RELATED"/>
    <property type="match status" value="1"/>
</dbReference>
<dbReference type="PANTHER" id="PTHR46261">
    <property type="entry name" value="HIGH MOBILITY GROUP B PROTEIN 4-RELATED"/>
    <property type="match status" value="1"/>
</dbReference>
<dbReference type="Pfam" id="PF00505">
    <property type="entry name" value="HMG_box"/>
    <property type="match status" value="1"/>
</dbReference>
<dbReference type="PRINTS" id="PR00886">
    <property type="entry name" value="HIGHMOBLTY12"/>
</dbReference>
<dbReference type="SMART" id="SM00398">
    <property type="entry name" value="HMG"/>
    <property type="match status" value="1"/>
</dbReference>
<dbReference type="SUPFAM" id="SSF47095">
    <property type="entry name" value="HMG-box"/>
    <property type="match status" value="1"/>
</dbReference>
<dbReference type="PROSITE" id="PS50118">
    <property type="entry name" value="HMG_BOX_2"/>
    <property type="match status" value="1"/>
</dbReference>
<sequence length="144" mass="15982">MKGAKSKTETRSSKLSVTKKPAKGAGRGKAAAKDPNKPKRPASAFFVFMEDFRETFKKENPKNKSVATVGKAAGDKWKSLSDSEKAPYVAKAEKRKVEYEKNIKAYNKKLEEGPKEDEESDKSVSEVNDEDDAEDGSEEEEDDD</sequence>
<proteinExistence type="evidence at protein level"/>
<accession>O49596</accession>
<accession>A8MQZ3</accession>
<accession>Q2V4M2</accession>
<accession>Q9LM85</accession>
<reference key="1">
    <citation type="journal article" date="1997" name="Eur. J. Biochem.">
        <title>Variability in Arabidopsis thaliana chromosomal high-mobility-group-1-like proteins.</title>
        <authorList>
            <person name="Stemmer C."/>
            <person name="Ritt C."/>
            <person name="Igloi G.L."/>
            <person name="Grimm R."/>
            <person name="Grasser K.D."/>
        </authorList>
    </citation>
    <scope>NUCLEOTIDE SEQUENCE [MRNA] (ISOFORM 1)</scope>
    <scope>FUNCTION</scope>
    <scope>TISSUE SPECIFICITY</scope>
    <source>
        <tissue>Leaf</tissue>
    </source>
</reference>
<reference key="2">
    <citation type="journal article" date="2000" name="Nature">
        <title>Sequence and analysis of chromosome 1 of the plant Arabidopsis thaliana.</title>
        <authorList>
            <person name="Theologis A."/>
            <person name="Ecker J.R."/>
            <person name="Palm C.J."/>
            <person name="Federspiel N.A."/>
            <person name="Kaul S."/>
            <person name="White O."/>
            <person name="Alonso J."/>
            <person name="Altafi H."/>
            <person name="Araujo R."/>
            <person name="Bowman C.L."/>
            <person name="Brooks S.Y."/>
            <person name="Buehler E."/>
            <person name="Chan A."/>
            <person name="Chao Q."/>
            <person name="Chen H."/>
            <person name="Cheuk R.F."/>
            <person name="Chin C.W."/>
            <person name="Chung M.K."/>
            <person name="Conn L."/>
            <person name="Conway A.B."/>
            <person name="Conway A.R."/>
            <person name="Creasy T.H."/>
            <person name="Dewar K."/>
            <person name="Dunn P."/>
            <person name="Etgu P."/>
            <person name="Feldblyum T.V."/>
            <person name="Feng J.-D."/>
            <person name="Fong B."/>
            <person name="Fujii C.Y."/>
            <person name="Gill J.E."/>
            <person name="Goldsmith A.D."/>
            <person name="Haas B."/>
            <person name="Hansen N.F."/>
            <person name="Hughes B."/>
            <person name="Huizar L."/>
            <person name="Hunter J.L."/>
            <person name="Jenkins J."/>
            <person name="Johnson-Hopson C."/>
            <person name="Khan S."/>
            <person name="Khaykin E."/>
            <person name="Kim C.J."/>
            <person name="Koo H.L."/>
            <person name="Kremenetskaia I."/>
            <person name="Kurtz D.B."/>
            <person name="Kwan A."/>
            <person name="Lam B."/>
            <person name="Langin-Hooper S."/>
            <person name="Lee A."/>
            <person name="Lee J.M."/>
            <person name="Lenz C.A."/>
            <person name="Li J.H."/>
            <person name="Li Y.-P."/>
            <person name="Lin X."/>
            <person name="Liu S.X."/>
            <person name="Liu Z.A."/>
            <person name="Luros J.S."/>
            <person name="Maiti R."/>
            <person name="Marziali A."/>
            <person name="Militscher J."/>
            <person name="Miranda M."/>
            <person name="Nguyen M."/>
            <person name="Nierman W.C."/>
            <person name="Osborne B.I."/>
            <person name="Pai G."/>
            <person name="Peterson J."/>
            <person name="Pham P.K."/>
            <person name="Rizzo M."/>
            <person name="Rooney T."/>
            <person name="Rowley D."/>
            <person name="Sakano H."/>
            <person name="Salzberg S.L."/>
            <person name="Schwartz J.R."/>
            <person name="Shinn P."/>
            <person name="Southwick A.M."/>
            <person name="Sun H."/>
            <person name="Tallon L.J."/>
            <person name="Tambunga G."/>
            <person name="Toriumi M.J."/>
            <person name="Town C.D."/>
            <person name="Utterback T."/>
            <person name="Van Aken S."/>
            <person name="Vaysberg M."/>
            <person name="Vysotskaia V.S."/>
            <person name="Walker M."/>
            <person name="Wu D."/>
            <person name="Yu G."/>
            <person name="Fraser C.M."/>
            <person name="Venter J.C."/>
            <person name="Davis R.W."/>
        </authorList>
    </citation>
    <scope>NUCLEOTIDE SEQUENCE [LARGE SCALE GENOMIC DNA]</scope>
    <source>
        <strain>cv. Columbia</strain>
    </source>
</reference>
<reference key="3">
    <citation type="journal article" date="2017" name="Plant J.">
        <title>Araport11: a complete reannotation of the Arabidopsis thaliana reference genome.</title>
        <authorList>
            <person name="Cheng C.Y."/>
            <person name="Krishnakumar V."/>
            <person name="Chan A.P."/>
            <person name="Thibaud-Nissen F."/>
            <person name="Schobel S."/>
            <person name="Town C.D."/>
        </authorList>
    </citation>
    <scope>GENOME REANNOTATION</scope>
    <source>
        <strain>cv. Columbia</strain>
    </source>
</reference>
<reference key="4">
    <citation type="journal article" date="2003" name="Science">
        <title>Empirical analysis of transcriptional activity in the Arabidopsis genome.</title>
        <authorList>
            <person name="Yamada K."/>
            <person name="Lim J."/>
            <person name="Dale J.M."/>
            <person name="Chen H."/>
            <person name="Shinn P."/>
            <person name="Palm C.J."/>
            <person name="Southwick A.M."/>
            <person name="Wu H.C."/>
            <person name="Kim C.J."/>
            <person name="Nguyen M."/>
            <person name="Pham P.K."/>
            <person name="Cheuk R.F."/>
            <person name="Karlin-Newmann G."/>
            <person name="Liu S.X."/>
            <person name="Lam B."/>
            <person name="Sakano H."/>
            <person name="Wu T."/>
            <person name="Yu G."/>
            <person name="Miranda M."/>
            <person name="Quach H.L."/>
            <person name="Tripp M."/>
            <person name="Chang C.H."/>
            <person name="Lee J.M."/>
            <person name="Toriumi M.J."/>
            <person name="Chan M.M."/>
            <person name="Tang C.C."/>
            <person name="Onodera C.S."/>
            <person name="Deng J.M."/>
            <person name="Akiyama K."/>
            <person name="Ansari Y."/>
            <person name="Arakawa T."/>
            <person name="Banh J."/>
            <person name="Banno F."/>
            <person name="Bowser L."/>
            <person name="Brooks S.Y."/>
            <person name="Carninci P."/>
            <person name="Chao Q."/>
            <person name="Choy N."/>
            <person name="Enju A."/>
            <person name="Goldsmith A.D."/>
            <person name="Gurjal M."/>
            <person name="Hansen N.F."/>
            <person name="Hayashizaki Y."/>
            <person name="Johnson-Hopson C."/>
            <person name="Hsuan V.W."/>
            <person name="Iida K."/>
            <person name="Karnes M."/>
            <person name="Khan S."/>
            <person name="Koesema E."/>
            <person name="Ishida J."/>
            <person name="Jiang P.X."/>
            <person name="Jones T."/>
            <person name="Kawai J."/>
            <person name="Kamiya A."/>
            <person name="Meyers C."/>
            <person name="Nakajima M."/>
            <person name="Narusaka M."/>
            <person name="Seki M."/>
            <person name="Sakurai T."/>
            <person name="Satou M."/>
            <person name="Tamse R."/>
            <person name="Vaysberg M."/>
            <person name="Wallender E.K."/>
            <person name="Wong C."/>
            <person name="Yamamura Y."/>
            <person name="Yuan S."/>
            <person name="Shinozaki K."/>
            <person name="Davis R.W."/>
            <person name="Theologis A."/>
            <person name="Ecker J.R."/>
        </authorList>
    </citation>
    <scope>NUCLEOTIDE SEQUENCE [LARGE SCALE MRNA] (ISOFORM 1)</scope>
    <source>
        <strain>cv. Columbia</strain>
    </source>
</reference>
<reference key="5">
    <citation type="journal article" date="2002" name="Science">
        <title>Functional annotation of a full-length Arabidopsis cDNA collection.</title>
        <authorList>
            <person name="Seki M."/>
            <person name="Narusaka M."/>
            <person name="Kamiya A."/>
            <person name="Ishida J."/>
            <person name="Satou M."/>
            <person name="Sakurai T."/>
            <person name="Nakajima M."/>
            <person name="Enju A."/>
            <person name="Akiyama K."/>
            <person name="Oono Y."/>
            <person name="Muramatsu M."/>
            <person name="Hayashizaki Y."/>
            <person name="Kawai J."/>
            <person name="Carninci P."/>
            <person name="Itoh M."/>
            <person name="Ishii Y."/>
            <person name="Arakawa T."/>
            <person name="Shibata K."/>
            <person name="Shinagawa A."/>
            <person name="Shinozaki K."/>
        </authorList>
    </citation>
    <scope>NUCLEOTIDE SEQUENCE [LARGE SCALE MRNA] (ISOFORM 1)</scope>
    <source>
        <strain>cv. Columbia</strain>
    </source>
</reference>
<reference key="6">
    <citation type="submission" date="2009-03" db="EMBL/GenBank/DDBJ databases">
        <title>ORF cloning and analysis of Arabidopsis transcription factor genes.</title>
        <authorList>
            <person name="Fujita M."/>
            <person name="Mizukado S."/>
            <person name="Seki M."/>
            <person name="Shinozaki K."/>
            <person name="Mitsuda N."/>
            <person name="Takiguchi Y."/>
            <person name="Takagi M."/>
        </authorList>
    </citation>
    <scope>NUCLEOTIDE SEQUENCE [LARGE SCALE MRNA] (ISOFORM 1)</scope>
</reference>
<reference key="7">
    <citation type="submission" date="2002-03" db="EMBL/GenBank/DDBJ databases">
        <title>Full-length cDNA from Arabidopsis thaliana.</title>
        <authorList>
            <person name="Brover V.V."/>
            <person name="Troukhan M.E."/>
            <person name="Alexandrov N.A."/>
            <person name="Lu Y.-P."/>
            <person name="Flavell R.B."/>
            <person name="Feldmann K.A."/>
        </authorList>
    </citation>
    <scope>NUCLEOTIDE SEQUENCE [LARGE SCALE MRNA] (ISOFORM 1)</scope>
</reference>
<reference key="8">
    <citation type="journal article" date="2003" name="Biochemistry">
        <title>Phosphorylation of maize and Arabidopsis HMGB proteins by protein kinase CK2alpha.</title>
        <authorList>
            <person name="Stemmer C."/>
            <person name="Leeming D.J."/>
            <person name="Franssen L."/>
            <person name="Grimm R."/>
            <person name="Grasser K.D."/>
        </authorList>
    </citation>
    <scope>PHOSPHORYLATION</scope>
</reference>
<reference key="9">
    <citation type="journal article" date="2007" name="FEBS Lett.">
        <title>Overlapping expression patterns among the genes encoding Arabidopsis chromosomal high mobility group (HMG) proteins.</title>
        <authorList>
            <person name="Launholt D."/>
            <person name="Groenlund J.T."/>
            <person name="Nielsen H.K."/>
            <person name="Grasser K.D."/>
        </authorList>
    </citation>
    <scope>TISSUE SPECIFICITY</scope>
</reference>
<reference key="10">
    <citation type="journal article" date="2007" name="Plant Cell Physiol.">
        <title>Characterization of transgenic Arabidopsis plants overexpressing high mobility group B proteins under high salinity, drought or cold stress.</title>
        <authorList>
            <person name="Kwak K.J."/>
            <person name="Kim J.Y."/>
            <person name="Kim Y.O."/>
            <person name="Kang H."/>
        </authorList>
    </citation>
    <scope>FUNCTION</scope>
    <scope>TISSUE SPECIFICITY</scope>
    <scope>INDUCTION BY COLD; DROUGHT AND SALT</scope>
</reference>
<reference key="11">
    <citation type="journal article" date="2010" name="Biochim. Biophys. Acta">
        <title>The role of chromosomal HMGB proteins in plants.</title>
        <authorList>
            <person name="Pedersen D.S."/>
            <person name="Grasser K.D."/>
        </authorList>
    </citation>
    <scope>REVIEW</scope>
    <scope>SUBCELLULAR LOCATION</scope>
</reference>
<comment type="function">
    <text evidence="4 7">Binds preferentially double-stranded DNA. Confers sensitivity to salt and drought stresses.</text>
</comment>
<comment type="subcellular location">
    <subcellularLocation>
        <location evidence="2 6">Nucleus</location>
    </subcellularLocation>
    <subcellularLocation>
        <location evidence="6">Cytoplasm</location>
        <location evidence="6">Cytosol</location>
    </subcellularLocation>
</comment>
<comment type="alternative products">
    <event type="alternative splicing"/>
    <isoform>
        <id>O49596-1</id>
        <name>1</name>
        <sequence type="displayed"/>
    </isoform>
    <isoform>
        <id>O49596-2</id>
        <name>2</name>
        <sequence type="described" ref="VSP_039940"/>
    </isoform>
    <isoform>
        <id>O49596-3</id>
        <name>3</name>
        <sequence type="described" ref="VSP_039941"/>
    </isoform>
</comment>
<comment type="tissue specificity">
    <text evidence="4 5 7">Mostly expressed in cotyledons, hypocotyls, leaves, and flowers (excluding pedicels), also present in roots and stems.</text>
</comment>
<comment type="induction">
    <text evidence="4">Up-regulated by cold stress, but down-regulated by drought and salt stress.</text>
</comment>
<comment type="similarity">
    <text evidence="8">Belongs to the HMGB family.</text>
</comment>
<comment type="sequence caution" evidence="8">
    <conflict type="erroneous gene model prediction">
        <sequence resource="EMBL-CDS" id="AAF80615"/>
    </conflict>
</comment>
<name>HMGB2_ARATH</name>
<keyword id="KW-0025">Alternative splicing</keyword>
<keyword id="KW-0963">Cytoplasm</keyword>
<keyword id="KW-0238">DNA-binding</keyword>
<keyword id="KW-0539">Nucleus</keyword>
<keyword id="KW-0597">Phosphoprotein</keyword>
<keyword id="KW-1185">Reference proteome</keyword>